<sequence length="156" mass="17767">MAATLTPEQITEYKGIFEMFDEEGNGLVKTDDLESLMSLIGINPTKRDLANMAKDVDKDKKGTFNCDGFLVLMGIYHEKSKNQDEELRAAFKVFDKEHKGYIEWDTLKYVLMNAGEPLNEHEAELMMKEADKDGDGTIDYEEFVAMMTGESFKLTQ</sequence>
<accession>Q3SB09</accession>
<reference key="1">
    <citation type="journal article" date="2005" name="Cell. Mol. Life Sci.">
        <title>Identification and analysis of venom gland-specific genes from the coastal taipan (Oxyuranus scutellatus) and related species.</title>
        <authorList>
            <person name="St Pierre L."/>
            <person name="Woods R."/>
            <person name="Earl S.T.H."/>
            <person name="Masci P.P."/>
            <person name="Lavin M.F."/>
        </authorList>
    </citation>
    <scope>NUCLEOTIDE SEQUENCE [MRNA]</scope>
    <source>
        <tissue>Venom gland</tissue>
    </source>
</reference>
<keyword id="KW-0106">Calcium</keyword>
<keyword id="KW-0963">Cytoplasm</keyword>
<keyword id="KW-0479">Metal-binding</keyword>
<keyword id="KW-0677">Repeat</keyword>
<dbReference type="EMBL" id="DQ084033">
    <property type="protein sequence ID" value="AAZ38978.1"/>
    <property type="molecule type" value="mRNA"/>
</dbReference>
<dbReference type="SMR" id="Q3SB09"/>
<dbReference type="GO" id="GO:0005737">
    <property type="term" value="C:cytoplasm"/>
    <property type="evidence" value="ECO:0007669"/>
    <property type="project" value="UniProtKB-SubCell"/>
</dbReference>
<dbReference type="GO" id="GO:0016460">
    <property type="term" value="C:myosin II complex"/>
    <property type="evidence" value="ECO:0007669"/>
    <property type="project" value="TreeGrafter"/>
</dbReference>
<dbReference type="GO" id="GO:0005509">
    <property type="term" value="F:calcium ion binding"/>
    <property type="evidence" value="ECO:0007669"/>
    <property type="project" value="InterPro"/>
</dbReference>
<dbReference type="CDD" id="cd00051">
    <property type="entry name" value="EFh"/>
    <property type="match status" value="1"/>
</dbReference>
<dbReference type="FunFam" id="1.10.238.10:FF:000163">
    <property type="entry name" value="Calmodulin like 6"/>
    <property type="match status" value="1"/>
</dbReference>
<dbReference type="Gene3D" id="1.10.238.10">
    <property type="entry name" value="EF-hand"/>
    <property type="match status" value="2"/>
</dbReference>
<dbReference type="InterPro" id="IPR050230">
    <property type="entry name" value="CALM/Myosin/TropC-like"/>
</dbReference>
<dbReference type="InterPro" id="IPR011992">
    <property type="entry name" value="EF-hand-dom_pair"/>
</dbReference>
<dbReference type="InterPro" id="IPR018247">
    <property type="entry name" value="EF_Hand_1_Ca_BS"/>
</dbReference>
<dbReference type="InterPro" id="IPR002048">
    <property type="entry name" value="EF_hand_dom"/>
</dbReference>
<dbReference type="PANTHER" id="PTHR23048:SF56">
    <property type="entry name" value="CALMODULIN 2"/>
    <property type="match status" value="1"/>
</dbReference>
<dbReference type="PANTHER" id="PTHR23048">
    <property type="entry name" value="MYOSIN LIGHT CHAIN 1, 3"/>
    <property type="match status" value="1"/>
</dbReference>
<dbReference type="Pfam" id="PF13499">
    <property type="entry name" value="EF-hand_7"/>
    <property type="match status" value="1"/>
</dbReference>
<dbReference type="Pfam" id="PF13833">
    <property type="entry name" value="EF-hand_8"/>
    <property type="match status" value="1"/>
</dbReference>
<dbReference type="SMART" id="SM00054">
    <property type="entry name" value="EFh"/>
    <property type="match status" value="4"/>
</dbReference>
<dbReference type="SUPFAM" id="SSF47473">
    <property type="entry name" value="EF-hand"/>
    <property type="match status" value="1"/>
</dbReference>
<dbReference type="PROSITE" id="PS00018">
    <property type="entry name" value="EF_HAND_1"/>
    <property type="match status" value="1"/>
</dbReference>
<dbReference type="PROSITE" id="PS50222">
    <property type="entry name" value="EF_HAND_2"/>
    <property type="match status" value="4"/>
</dbReference>
<evidence type="ECO:0000250" key="1"/>
<evidence type="ECO:0000255" key="2">
    <source>
        <dbReference type="PROSITE-ProRule" id="PRU00448"/>
    </source>
</evidence>
<evidence type="ECO:0000305" key="3"/>
<protein>
    <recommendedName>
        <fullName>Calglandulin</fullName>
    </recommendedName>
</protein>
<name>CALGL_PSEAU</name>
<comment type="function">
    <text evidence="1">May be involved in the cellular control mechanism of the secretion of toxins from the gland into the venom.</text>
</comment>
<comment type="subcellular location">
    <subcellularLocation>
        <location evidence="3">Cytoplasm</location>
    </subcellularLocation>
    <text evidence="1">Not found in venom.</text>
</comment>
<comment type="tissue specificity">
    <text>Expressed by the venom gland.</text>
</comment>
<comment type="similarity">
    <text evidence="3">Belongs to the calmodulin family. Calglandulin subfamily.</text>
</comment>
<feature type="chain" id="PRO_0000073554" description="Calglandulin">
    <location>
        <begin position="1"/>
        <end position="156"/>
    </location>
</feature>
<feature type="domain" description="EF-hand 1" evidence="2">
    <location>
        <begin position="8"/>
        <end position="43"/>
    </location>
</feature>
<feature type="domain" description="EF-hand 2" evidence="2">
    <location>
        <begin position="44"/>
        <end position="79"/>
    </location>
</feature>
<feature type="domain" description="EF-hand 3" evidence="2">
    <location>
        <begin position="82"/>
        <end position="117"/>
    </location>
</feature>
<feature type="domain" description="EF-hand 4" evidence="2">
    <location>
        <begin position="118"/>
        <end position="153"/>
    </location>
</feature>
<feature type="binding site" evidence="2">
    <location>
        <position position="131"/>
    </location>
    <ligand>
        <name>Ca(2+)</name>
        <dbReference type="ChEBI" id="CHEBI:29108"/>
    </ligand>
</feature>
<feature type="binding site" evidence="2">
    <location>
        <position position="133"/>
    </location>
    <ligand>
        <name>Ca(2+)</name>
        <dbReference type="ChEBI" id="CHEBI:29108"/>
    </ligand>
</feature>
<feature type="binding site" evidence="2">
    <location>
        <position position="135"/>
    </location>
    <ligand>
        <name>Ca(2+)</name>
        <dbReference type="ChEBI" id="CHEBI:29108"/>
    </ligand>
</feature>
<feature type="binding site" evidence="2">
    <location>
        <position position="137"/>
    </location>
    <ligand>
        <name>Ca(2+)</name>
        <dbReference type="ChEBI" id="CHEBI:29108"/>
    </ligand>
</feature>
<feature type="binding site" evidence="2">
    <location>
        <position position="142"/>
    </location>
    <ligand>
        <name>Ca(2+)</name>
        <dbReference type="ChEBI" id="CHEBI:29108"/>
    </ligand>
</feature>
<organism>
    <name type="scientific">Pseudechis australis</name>
    <name type="common">Mulga snake</name>
    <name type="synonym">King brown snake</name>
    <dbReference type="NCBI Taxonomy" id="8670"/>
    <lineage>
        <taxon>Eukaryota</taxon>
        <taxon>Metazoa</taxon>
        <taxon>Chordata</taxon>
        <taxon>Craniata</taxon>
        <taxon>Vertebrata</taxon>
        <taxon>Euteleostomi</taxon>
        <taxon>Lepidosauria</taxon>
        <taxon>Squamata</taxon>
        <taxon>Bifurcata</taxon>
        <taxon>Unidentata</taxon>
        <taxon>Episquamata</taxon>
        <taxon>Toxicofera</taxon>
        <taxon>Serpentes</taxon>
        <taxon>Colubroidea</taxon>
        <taxon>Elapidae</taxon>
        <taxon>Hydrophiinae</taxon>
        <taxon>Pseudechis</taxon>
    </lineage>
</organism>
<proteinExistence type="evidence at transcript level"/>